<sequence>MERASLIQKAKLAEQAERYEDMAAFMKSAVEKGEELSCEERNLLSVAYKNVVGGQRAAWRVLSSIEQKSNEEGSEEKGPEVKEYREKVETELRGVCDTVLGLLDSHLIKGAGDAESRVFYLKMKGDYYRYLAEVATGDDKKRIIDSARSAYQEAMDISKKEMPPTNPIRLGLALNFSVFHYEIANSPEEAISLAKTTFDEAMADLHTLSEDSYKDSTLIMQLLRDNLTLWTADSAGEEGGEAPEEPQS</sequence>
<gene>
    <name type="primary">Sfn</name>
    <name type="synonym">Mkrn3</name>
</gene>
<protein>
    <recommendedName>
        <fullName>14-3-3 protein sigma</fullName>
    </recommendedName>
    <alternativeName>
        <fullName>Stratifin</fullName>
    </alternativeName>
</protein>
<proteinExistence type="evidence at protein level"/>
<dbReference type="EMBL" id="AF058798">
    <property type="protein sequence ID" value="AAC14344.1"/>
    <property type="molecule type" value="mRNA"/>
</dbReference>
<dbReference type="EMBL" id="AK146490">
    <property type="protein sequence ID" value="BAE27209.1"/>
    <property type="molecule type" value="mRNA"/>
</dbReference>
<dbReference type="EMBL" id="AK169358">
    <property type="protein sequence ID" value="BAE41107.1"/>
    <property type="molecule type" value="mRNA"/>
</dbReference>
<dbReference type="EMBL" id="AL627228">
    <property type="status" value="NOT_ANNOTATED_CDS"/>
    <property type="molecule type" value="Genomic_DNA"/>
</dbReference>
<dbReference type="EMBL" id="CH466552">
    <property type="protein sequence ID" value="EDL30056.1"/>
    <property type="molecule type" value="Genomic_DNA"/>
</dbReference>
<dbReference type="CCDS" id="CCDS18754.1"/>
<dbReference type="RefSeq" id="NP_061224.2">
    <property type="nucleotide sequence ID" value="NM_018754.3"/>
</dbReference>
<dbReference type="SMR" id="O70456"/>
<dbReference type="BioGRID" id="207743">
    <property type="interactions" value="19"/>
</dbReference>
<dbReference type="FunCoup" id="O70456">
    <property type="interactions" value="720"/>
</dbReference>
<dbReference type="IntAct" id="O70456">
    <property type="interactions" value="6"/>
</dbReference>
<dbReference type="MINT" id="O70456"/>
<dbReference type="STRING" id="10090.ENSMUSP00000050374"/>
<dbReference type="ChEMBL" id="CHEMBL1909483"/>
<dbReference type="iPTMnet" id="O70456"/>
<dbReference type="PhosphoSitePlus" id="O70456"/>
<dbReference type="CPTAC" id="non-CPTAC-3758"/>
<dbReference type="jPOST" id="O70456"/>
<dbReference type="PaxDb" id="10090-ENSMUSP00000050374"/>
<dbReference type="PeptideAtlas" id="O70456"/>
<dbReference type="ProteomicsDB" id="296416"/>
<dbReference type="Pumba" id="O70456"/>
<dbReference type="Antibodypedia" id="1907">
    <property type="antibodies" value="778 antibodies from 45 providers"/>
</dbReference>
<dbReference type="DNASU" id="55948"/>
<dbReference type="Ensembl" id="ENSMUST00000057311.4">
    <property type="protein sequence ID" value="ENSMUSP00000050374.4"/>
    <property type="gene ID" value="ENSMUSG00000047281.4"/>
</dbReference>
<dbReference type="GeneID" id="55948"/>
<dbReference type="KEGG" id="mmu:55948"/>
<dbReference type="UCSC" id="uc008vdc.1">
    <property type="organism name" value="mouse"/>
</dbReference>
<dbReference type="AGR" id="MGI:1891831"/>
<dbReference type="CTD" id="2810"/>
<dbReference type="MGI" id="MGI:1891831">
    <property type="gene designation" value="Sfn"/>
</dbReference>
<dbReference type="VEuPathDB" id="HostDB:ENSMUSG00000047281"/>
<dbReference type="eggNOG" id="KOG0841">
    <property type="taxonomic scope" value="Eukaryota"/>
</dbReference>
<dbReference type="GeneTree" id="ENSGT01110000267238"/>
<dbReference type="HOGENOM" id="CLU_058290_1_0_1"/>
<dbReference type="InParanoid" id="O70456"/>
<dbReference type="OMA" id="ECRVFYL"/>
<dbReference type="OrthoDB" id="10260625at2759"/>
<dbReference type="PhylomeDB" id="O70456"/>
<dbReference type="TreeFam" id="TF102003"/>
<dbReference type="Reactome" id="R-MMU-111447">
    <property type="pathway name" value="Activation of BAD and translocation to mitochondria"/>
</dbReference>
<dbReference type="Reactome" id="R-MMU-5625740">
    <property type="pathway name" value="RHO GTPases activate PKNs"/>
</dbReference>
<dbReference type="Reactome" id="R-MMU-5628897">
    <property type="pathway name" value="TP53 Regulates Metabolic Genes"/>
</dbReference>
<dbReference type="Reactome" id="R-MMU-6804114">
    <property type="pathway name" value="TP53 Regulates Transcription of Genes Involved in G2 Cell Cycle Arrest"/>
</dbReference>
<dbReference type="Reactome" id="R-MMU-75035">
    <property type="pathway name" value="Chk1/Chk2(Cds1) mediated inactivation of Cyclin B:Cdk1 complex"/>
</dbReference>
<dbReference type="Reactome" id="R-MMU-9614399">
    <property type="pathway name" value="Regulation of localization of FOXO transcription factors"/>
</dbReference>
<dbReference type="BioGRID-ORCS" id="55948">
    <property type="hits" value="4 hits in 80 CRISPR screens"/>
</dbReference>
<dbReference type="CD-CODE" id="CE726F99">
    <property type="entry name" value="Postsynaptic density"/>
</dbReference>
<dbReference type="ChiTaRS" id="Sfn">
    <property type="organism name" value="mouse"/>
</dbReference>
<dbReference type="PRO" id="PR:O70456"/>
<dbReference type="Proteomes" id="UP000000589">
    <property type="component" value="Chromosome 4"/>
</dbReference>
<dbReference type="RNAct" id="O70456">
    <property type="molecule type" value="protein"/>
</dbReference>
<dbReference type="Bgee" id="ENSMUSG00000047281">
    <property type="expression patterns" value="Expressed in lip and 177 other cell types or tissues"/>
</dbReference>
<dbReference type="GO" id="GO:0005737">
    <property type="term" value="C:cytoplasm"/>
    <property type="evidence" value="ECO:0000314"/>
    <property type="project" value="UniProtKB"/>
</dbReference>
<dbReference type="GO" id="GO:0005829">
    <property type="term" value="C:cytosol"/>
    <property type="evidence" value="ECO:0000250"/>
    <property type="project" value="UniProtKB"/>
</dbReference>
<dbReference type="GO" id="GO:0005576">
    <property type="term" value="C:extracellular region"/>
    <property type="evidence" value="ECO:0007669"/>
    <property type="project" value="UniProtKB-SubCell"/>
</dbReference>
<dbReference type="GO" id="GO:0005634">
    <property type="term" value="C:nucleus"/>
    <property type="evidence" value="ECO:0000314"/>
    <property type="project" value="UniProtKB"/>
</dbReference>
<dbReference type="GO" id="GO:0042802">
    <property type="term" value="F:identical protein binding"/>
    <property type="evidence" value="ECO:0007669"/>
    <property type="project" value="Ensembl"/>
</dbReference>
<dbReference type="GO" id="GO:0051219">
    <property type="term" value="F:phosphoprotein binding"/>
    <property type="evidence" value="ECO:0000353"/>
    <property type="project" value="UniProtKB"/>
</dbReference>
<dbReference type="GO" id="GO:0050815">
    <property type="term" value="F:phosphoserine residue binding"/>
    <property type="evidence" value="ECO:0000250"/>
    <property type="project" value="UniProtKB"/>
</dbReference>
<dbReference type="GO" id="GO:0019901">
    <property type="term" value="F:protein kinase binding"/>
    <property type="evidence" value="ECO:0000314"/>
    <property type="project" value="UniProtKB"/>
</dbReference>
<dbReference type="GO" id="GO:0140311">
    <property type="term" value="F:protein sequestering activity"/>
    <property type="evidence" value="ECO:0000250"/>
    <property type="project" value="UniProtKB"/>
</dbReference>
<dbReference type="GO" id="GO:0141156">
    <property type="term" value="P:cAMP/PKA signal transduction"/>
    <property type="evidence" value="ECO:0000314"/>
    <property type="project" value="MGI"/>
</dbReference>
<dbReference type="GO" id="GO:0061436">
    <property type="term" value="P:establishment of skin barrier"/>
    <property type="evidence" value="ECO:0000315"/>
    <property type="project" value="UniProtKB"/>
</dbReference>
<dbReference type="GO" id="GO:0008630">
    <property type="term" value="P:intrinsic apoptotic signaling pathway in response to DNA damage"/>
    <property type="evidence" value="ECO:0007669"/>
    <property type="project" value="Ensembl"/>
</dbReference>
<dbReference type="GO" id="GO:0031424">
    <property type="term" value="P:keratinization"/>
    <property type="evidence" value="ECO:0000315"/>
    <property type="project" value="MGI"/>
</dbReference>
<dbReference type="GO" id="GO:0003334">
    <property type="term" value="P:keratinocyte development"/>
    <property type="evidence" value="ECO:0000316"/>
    <property type="project" value="MGI"/>
</dbReference>
<dbReference type="GO" id="GO:0030216">
    <property type="term" value="P:keratinocyte differentiation"/>
    <property type="evidence" value="ECO:0000315"/>
    <property type="project" value="MGI"/>
</dbReference>
<dbReference type="GO" id="GO:0043616">
    <property type="term" value="P:keratinocyte proliferation"/>
    <property type="evidence" value="ECO:0000316"/>
    <property type="project" value="MGI"/>
</dbReference>
<dbReference type="GO" id="GO:0045824">
    <property type="term" value="P:negative regulation of innate immune response"/>
    <property type="evidence" value="ECO:0000250"/>
    <property type="project" value="UniProtKB"/>
</dbReference>
<dbReference type="GO" id="GO:0010839">
    <property type="term" value="P:negative regulation of keratinocyte proliferation"/>
    <property type="evidence" value="ECO:0000316"/>
    <property type="project" value="MGI"/>
</dbReference>
<dbReference type="GO" id="GO:1903077">
    <property type="term" value="P:negative regulation of protein localization to plasma membrane"/>
    <property type="evidence" value="ECO:0000250"/>
    <property type="project" value="UniProtKB"/>
</dbReference>
<dbReference type="GO" id="GO:2000647">
    <property type="term" value="P:negative regulation of stem cell proliferation"/>
    <property type="evidence" value="ECO:0000316"/>
    <property type="project" value="MGI"/>
</dbReference>
<dbReference type="GO" id="GO:0000122">
    <property type="term" value="P:negative regulation of transcription by RNA polymerase II"/>
    <property type="evidence" value="ECO:0000314"/>
    <property type="project" value="MGI"/>
</dbReference>
<dbReference type="GO" id="GO:0045785">
    <property type="term" value="P:positive regulation of cell adhesion"/>
    <property type="evidence" value="ECO:0000250"/>
    <property type="project" value="UniProtKB"/>
</dbReference>
<dbReference type="GO" id="GO:0030307">
    <property type="term" value="P:positive regulation of cell growth"/>
    <property type="evidence" value="ECO:0000314"/>
    <property type="project" value="UniProtKB"/>
</dbReference>
<dbReference type="GO" id="GO:0045606">
    <property type="term" value="P:positive regulation of epidermal cell differentiation"/>
    <property type="evidence" value="ECO:0000315"/>
    <property type="project" value="UniProtKB"/>
</dbReference>
<dbReference type="GO" id="GO:0046827">
    <property type="term" value="P:positive regulation of protein export from nucleus"/>
    <property type="evidence" value="ECO:0000314"/>
    <property type="project" value="UniProtKB"/>
</dbReference>
<dbReference type="GO" id="GO:0006611">
    <property type="term" value="P:protein export from nucleus"/>
    <property type="evidence" value="ECO:0000314"/>
    <property type="project" value="MGI"/>
</dbReference>
<dbReference type="GO" id="GO:0051726">
    <property type="term" value="P:regulation of cell cycle"/>
    <property type="evidence" value="ECO:0000314"/>
    <property type="project" value="MGI"/>
</dbReference>
<dbReference type="GO" id="GO:0022407">
    <property type="term" value="P:regulation of cell-cell adhesion"/>
    <property type="evidence" value="ECO:0000250"/>
    <property type="project" value="UniProtKB"/>
</dbReference>
<dbReference type="GO" id="GO:0010482">
    <property type="term" value="P:regulation of epidermal cell division"/>
    <property type="evidence" value="ECO:0000315"/>
    <property type="project" value="UniProtKB"/>
</dbReference>
<dbReference type="GO" id="GO:0001836">
    <property type="term" value="P:release of cytochrome c from mitochondria"/>
    <property type="evidence" value="ECO:0007669"/>
    <property type="project" value="Ensembl"/>
</dbReference>
<dbReference type="GO" id="GO:0043588">
    <property type="term" value="P:skin development"/>
    <property type="evidence" value="ECO:0000315"/>
    <property type="project" value="MGI"/>
</dbReference>
<dbReference type="GO" id="GO:0072089">
    <property type="term" value="P:stem cell proliferation"/>
    <property type="evidence" value="ECO:0000316"/>
    <property type="project" value="MGI"/>
</dbReference>
<dbReference type="CDD" id="cd10019">
    <property type="entry name" value="14-3-3_sigma"/>
    <property type="match status" value="1"/>
</dbReference>
<dbReference type="FunFam" id="1.20.190.20:FF:000001">
    <property type="entry name" value="14-3-3 gamma 1"/>
    <property type="match status" value="1"/>
</dbReference>
<dbReference type="Gene3D" id="1.20.190.20">
    <property type="entry name" value="14-3-3 domain"/>
    <property type="match status" value="1"/>
</dbReference>
<dbReference type="InterPro" id="IPR000308">
    <property type="entry name" value="14-3-3"/>
</dbReference>
<dbReference type="InterPro" id="IPR023409">
    <property type="entry name" value="14-3-3_CS"/>
</dbReference>
<dbReference type="InterPro" id="IPR036815">
    <property type="entry name" value="14-3-3_dom_sf"/>
</dbReference>
<dbReference type="InterPro" id="IPR023410">
    <property type="entry name" value="14-3-3_domain"/>
</dbReference>
<dbReference type="InterPro" id="IPR037435">
    <property type="entry name" value="14-3-3_sigma"/>
</dbReference>
<dbReference type="PANTHER" id="PTHR18860">
    <property type="entry name" value="14-3-3 PROTEIN"/>
    <property type="match status" value="1"/>
</dbReference>
<dbReference type="Pfam" id="PF00244">
    <property type="entry name" value="14-3-3"/>
    <property type="match status" value="1"/>
</dbReference>
<dbReference type="PIRSF" id="PIRSF000868">
    <property type="entry name" value="14-3-3"/>
    <property type="match status" value="1"/>
</dbReference>
<dbReference type="PRINTS" id="PR00305">
    <property type="entry name" value="1433ZETA"/>
</dbReference>
<dbReference type="SMART" id="SM00101">
    <property type="entry name" value="14_3_3"/>
    <property type="match status" value="1"/>
</dbReference>
<dbReference type="SUPFAM" id="SSF48445">
    <property type="entry name" value="14-3-3 protein"/>
    <property type="match status" value="1"/>
</dbReference>
<dbReference type="PROSITE" id="PS00796">
    <property type="entry name" value="1433_1"/>
    <property type="match status" value="1"/>
</dbReference>
<dbReference type="PROSITE" id="PS00797">
    <property type="entry name" value="1433_2"/>
    <property type="match status" value="1"/>
</dbReference>
<keyword id="KW-0963">Cytoplasm</keyword>
<keyword id="KW-0903">Direct protein sequencing</keyword>
<keyword id="KW-0539">Nucleus</keyword>
<keyword id="KW-0597">Phosphoprotein</keyword>
<keyword id="KW-1185">Reference proteome</keyword>
<keyword id="KW-0964">Secreted</keyword>
<keyword id="KW-0832">Ubl conjugation</keyword>
<comment type="function">
    <text evidence="2 3">Adapter protein implicated in the regulation of a large spectrum of both general and specialized signaling pathways (By similarity). Binds to a large number of partners, usually by recognition of a phosphoserine or phosphothreonine motif (By similarity). Binding generally results in the modulation of the activity of the binding partner (By similarity). Promotes cytosolic retention of GBP1 GTPase by binding to phosphorylated GBP1, thereby inhibiting the innate immune response (By similarity). Also acts as a TP53/p53-regulated inhibitor of G2/M progression (By similarity). When bound to KRT17, regulates protein synthesis and epithelial cell growth by stimulating Akt/mTOR pathway (PubMed:16710422). Acts to maintain desmosome cell junction adhesion in epithelial cells via interacting with and sequestering PKP3 to the cytoplasm, thereby restricting its translocation to existing desmosome structures and therefore maintaining desmosome protein homeostasis (By similarity). Also acts to facilitate PKP3 exchange at desmosome plaques, thereby maintaining keratinocyte intercellular adhesion (By similarity). May also regulate MDM2 autoubiquitination and degradation and thereby activate p53/TP53 (By similarity).</text>
</comment>
<comment type="subunit">
    <text evidence="2 3 4 5">Homodimer (By similarity). Interacts with KRT17 and SAMSN1 (PubMed:16710422, PubMed:20478393). Found in a complex with XPO7, EIF4A1, ARHGAP1, VPS26A, VPS29 and VPS35 (By similarity). Interacts with GAB2 (By similarity). Interacts with SRPK2 (By similarity). Interacts with COPS6 (By similarity). Interacts with COP1; this interaction leads to proteasomal degradation (By similarity). Interacts with the 'Thr-369' phosphorylated form of DAPK2 (PubMed:26047703). Interacts with PI4KB (By similarity). Interacts with SLITRK1 (By similarity). Interacts with LRRK2; this interaction is dependent on LRRK2 phosphorylation (By similarity). Interacts with PKP3 (via N-terminus); the interaction maintains the cytoplasmic pool of PKP3, facilitates PKP3 exchange at desmosomes and restricts PKP3 localization to existing desmosome cell junctions (By similarity). Interacts with LCP2 (By similarity).</text>
</comment>
<comment type="interaction">
    <interactant intactId="EBI-1544118">
        <id>O70456</id>
    </interactant>
    <interactant intactId="EBI-309015">
        <id>Q9QWL7</id>
        <label>Krt17</label>
    </interactant>
    <organismsDiffer>false</organismsDiffer>
    <experiments>3</experiments>
</comment>
<comment type="subcellular location">
    <subcellularLocation>
        <location evidence="3">Cytoplasm</location>
    </subcellularLocation>
    <subcellularLocation>
        <location evidence="3">Nucleus</location>
    </subcellularLocation>
    <subcellularLocation>
        <location evidence="2">Secreted</location>
    </subcellularLocation>
    <text evidence="2">May be secreted by a non-classical secretory pathway.</text>
</comment>
<comment type="tissue specificity">
    <text evidence="3 6">Expressed in dorsal skin (at protein level) (PubMed:29678907). Expressed in the basal layer of skin epithelium and in outer root sheath of hair follicle (PubMed:16710422).</text>
</comment>
<comment type="induction">
    <text evidence="3">Induced in damaged or stressed epidermis.</text>
</comment>
<comment type="PTM">
    <text evidence="2">Ubiquitinated. Ubiquitination by RFFL induces proteasomal degradation and indirectly regulates p53/TP53 activation.</text>
</comment>
<comment type="miscellaneous">
    <text>14-3-3 proteins have been shown to be PKC activators, but this effect could be non-specific and only due to the acidic nature of the protein.</text>
</comment>
<comment type="similarity">
    <text evidence="7">Belongs to the 14-3-3 family.</text>
</comment>
<accession>O70456</accession>
<accession>Q3TEZ1</accession>
<evidence type="ECO:0000250" key="1"/>
<evidence type="ECO:0000250" key="2">
    <source>
        <dbReference type="UniProtKB" id="P31947"/>
    </source>
</evidence>
<evidence type="ECO:0000269" key="3">
    <source>
    </source>
</evidence>
<evidence type="ECO:0000269" key="4">
    <source>
    </source>
</evidence>
<evidence type="ECO:0000269" key="5">
    <source>
    </source>
</evidence>
<evidence type="ECO:0000269" key="6">
    <source>
    </source>
</evidence>
<evidence type="ECO:0000305" key="7"/>
<feature type="chain" id="PRO_0000058644" description="14-3-3 protein sigma">
    <location>
        <begin position="1"/>
        <end position="248"/>
    </location>
</feature>
<feature type="site" description="Interaction with phosphoserine on interacting protein" evidence="1">
    <location>
        <position position="56"/>
    </location>
</feature>
<feature type="site" description="Interaction with phosphoserine on interacting protein" evidence="1">
    <location>
        <position position="129"/>
    </location>
</feature>
<feature type="modified residue" description="Phosphoserine" evidence="2">
    <location>
        <position position="5"/>
    </location>
</feature>
<feature type="modified residue" description="Phosphoserine" evidence="2">
    <location>
        <position position="74"/>
    </location>
</feature>
<feature type="modified residue" description="Phosphoserine" evidence="2">
    <location>
        <position position="248"/>
    </location>
</feature>
<feature type="sequence conflict" description="In Ref. 1; AAC14344." evidence="7" ref="1">
    <original>EEPQS</original>
    <variation>DDPHI</variation>
    <location>
        <begin position="244"/>
        <end position="248"/>
    </location>
</feature>
<reference key="1">
    <citation type="submission" date="1998-04" db="EMBL/GenBank/DDBJ databases">
        <authorList>
            <person name="Karpitskiy V.V."/>
            <person name="Shaw A.S."/>
        </authorList>
    </citation>
    <scope>NUCLEOTIDE SEQUENCE [MRNA]</scope>
    <source>
        <strain>FVB/N</strain>
    </source>
</reference>
<reference key="2">
    <citation type="journal article" date="2005" name="Science">
        <title>The transcriptional landscape of the mammalian genome.</title>
        <authorList>
            <person name="Carninci P."/>
            <person name="Kasukawa T."/>
            <person name="Katayama S."/>
            <person name="Gough J."/>
            <person name="Frith M.C."/>
            <person name="Maeda N."/>
            <person name="Oyama R."/>
            <person name="Ravasi T."/>
            <person name="Lenhard B."/>
            <person name="Wells C."/>
            <person name="Kodzius R."/>
            <person name="Shimokawa K."/>
            <person name="Bajic V.B."/>
            <person name="Brenner S.E."/>
            <person name="Batalov S."/>
            <person name="Forrest A.R."/>
            <person name="Zavolan M."/>
            <person name="Davis M.J."/>
            <person name="Wilming L.G."/>
            <person name="Aidinis V."/>
            <person name="Allen J.E."/>
            <person name="Ambesi-Impiombato A."/>
            <person name="Apweiler R."/>
            <person name="Aturaliya R.N."/>
            <person name="Bailey T.L."/>
            <person name="Bansal M."/>
            <person name="Baxter L."/>
            <person name="Beisel K.W."/>
            <person name="Bersano T."/>
            <person name="Bono H."/>
            <person name="Chalk A.M."/>
            <person name="Chiu K.P."/>
            <person name="Choudhary V."/>
            <person name="Christoffels A."/>
            <person name="Clutterbuck D.R."/>
            <person name="Crowe M.L."/>
            <person name="Dalla E."/>
            <person name="Dalrymple B.P."/>
            <person name="de Bono B."/>
            <person name="Della Gatta G."/>
            <person name="di Bernardo D."/>
            <person name="Down T."/>
            <person name="Engstrom P."/>
            <person name="Fagiolini M."/>
            <person name="Faulkner G."/>
            <person name="Fletcher C.F."/>
            <person name="Fukushima T."/>
            <person name="Furuno M."/>
            <person name="Futaki S."/>
            <person name="Gariboldi M."/>
            <person name="Georgii-Hemming P."/>
            <person name="Gingeras T.R."/>
            <person name="Gojobori T."/>
            <person name="Green R.E."/>
            <person name="Gustincich S."/>
            <person name="Harbers M."/>
            <person name="Hayashi Y."/>
            <person name="Hensch T.K."/>
            <person name="Hirokawa N."/>
            <person name="Hill D."/>
            <person name="Huminiecki L."/>
            <person name="Iacono M."/>
            <person name="Ikeo K."/>
            <person name="Iwama A."/>
            <person name="Ishikawa T."/>
            <person name="Jakt M."/>
            <person name="Kanapin A."/>
            <person name="Katoh M."/>
            <person name="Kawasawa Y."/>
            <person name="Kelso J."/>
            <person name="Kitamura H."/>
            <person name="Kitano H."/>
            <person name="Kollias G."/>
            <person name="Krishnan S.P."/>
            <person name="Kruger A."/>
            <person name="Kummerfeld S.K."/>
            <person name="Kurochkin I.V."/>
            <person name="Lareau L.F."/>
            <person name="Lazarevic D."/>
            <person name="Lipovich L."/>
            <person name="Liu J."/>
            <person name="Liuni S."/>
            <person name="McWilliam S."/>
            <person name="Madan Babu M."/>
            <person name="Madera M."/>
            <person name="Marchionni L."/>
            <person name="Matsuda H."/>
            <person name="Matsuzawa S."/>
            <person name="Miki H."/>
            <person name="Mignone F."/>
            <person name="Miyake S."/>
            <person name="Morris K."/>
            <person name="Mottagui-Tabar S."/>
            <person name="Mulder N."/>
            <person name="Nakano N."/>
            <person name="Nakauchi H."/>
            <person name="Ng P."/>
            <person name="Nilsson R."/>
            <person name="Nishiguchi S."/>
            <person name="Nishikawa S."/>
            <person name="Nori F."/>
            <person name="Ohara O."/>
            <person name="Okazaki Y."/>
            <person name="Orlando V."/>
            <person name="Pang K.C."/>
            <person name="Pavan W.J."/>
            <person name="Pavesi G."/>
            <person name="Pesole G."/>
            <person name="Petrovsky N."/>
            <person name="Piazza S."/>
            <person name="Reed J."/>
            <person name="Reid J.F."/>
            <person name="Ring B.Z."/>
            <person name="Ringwald M."/>
            <person name="Rost B."/>
            <person name="Ruan Y."/>
            <person name="Salzberg S.L."/>
            <person name="Sandelin A."/>
            <person name="Schneider C."/>
            <person name="Schoenbach C."/>
            <person name="Sekiguchi K."/>
            <person name="Semple C.A."/>
            <person name="Seno S."/>
            <person name="Sessa L."/>
            <person name="Sheng Y."/>
            <person name="Shibata Y."/>
            <person name="Shimada H."/>
            <person name="Shimada K."/>
            <person name="Silva D."/>
            <person name="Sinclair B."/>
            <person name="Sperling S."/>
            <person name="Stupka E."/>
            <person name="Sugiura K."/>
            <person name="Sultana R."/>
            <person name="Takenaka Y."/>
            <person name="Taki K."/>
            <person name="Tammoja K."/>
            <person name="Tan S.L."/>
            <person name="Tang S."/>
            <person name="Taylor M.S."/>
            <person name="Tegner J."/>
            <person name="Teichmann S.A."/>
            <person name="Ueda H.R."/>
            <person name="van Nimwegen E."/>
            <person name="Verardo R."/>
            <person name="Wei C.L."/>
            <person name="Yagi K."/>
            <person name="Yamanishi H."/>
            <person name="Zabarovsky E."/>
            <person name="Zhu S."/>
            <person name="Zimmer A."/>
            <person name="Hide W."/>
            <person name="Bult C."/>
            <person name="Grimmond S.M."/>
            <person name="Teasdale R.D."/>
            <person name="Liu E.T."/>
            <person name="Brusic V."/>
            <person name="Quackenbush J."/>
            <person name="Wahlestedt C."/>
            <person name="Mattick J.S."/>
            <person name="Hume D.A."/>
            <person name="Kai C."/>
            <person name="Sasaki D."/>
            <person name="Tomaru Y."/>
            <person name="Fukuda S."/>
            <person name="Kanamori-Katayama M."/>
            <person name="Suzuki M."/>
            <person name="Aoki J."/>
            <person name="Arakawa T."/>
            <person name="Iida J."/>
            <person name="Imamura K."/>
            <person name="Itoh M."/>
            <person name="Kato T."/>
            <person name="Kawaji H."/>
            <person name="Kawagashira N."/>
            <person name="Kawashima T."/>
            <person name="Kojima M."/>
            <person name="Kondo S."/>
            <person name="Konno H."/>
            <person name="Nakano K."/>
            <person name="Ninomiya N."/>
            <person name="Nishio T."/>
            <person name="Okada M."/>
            <person name="Plessy C."/>
            <person name="Shibata K."/>
            <person name="Shiraki T."/>
            <person name="Suzuki S."/>
            <person name="Tagami M."/>
            <person name="Waki K."/>
            <person name="Watahiki A."/>
            <person name="Okamura-Oho Y."/>
            <person name="Suzuki H."/>
            <person name="Kawai J."/>
            <person name="Hayashizaki Y."/>
        </authorList>
    </citation>
    <scope>NUCLEOTIDE SEQUENCE [LARGE SCALE MRNA]</scope>
    <source>
        <strain>C57BL/6J</strain>
        <tissue>Heart</tissue>
        <tissue>Stomach</tissue>
    </source>
</reference>
<reference key="3">
    <citation type="journal article" date="2009" name="PLoS Biol.">
        <title>Lineage-specific biology revealed by a finished genome assembly of the mouse.</title>
        <authorList>
            <person name="Church D.M."/>
            <person name="Goodstadt L."/>
            <person name="Hillier L.W."/>
            <person name="Zody M.C."/>
            <person name="Goldstein S."/>
            <person name="She X."/>
            <person name="Bult C.J."/>
            <person name="Agarwala R."/>
            <person name="Cherry J.L."/>
            <person name="DiCuccio M."/>
            <person name="Hlavina W."/>
            <person name="Kapustin Y."/>
            <person name="Meric P."/>
            <person name="Maglott D."/>
            <person name="Birtle Z."/>
            <person name="Marques A.C."/>
            <person name="Graves T."/>
            <person name="Zhou S."/>
            <person name="Teague B."/>
            <person name="Potamousis K."/>
            <person name="Churas C."/>
            <person name="Place M."/>
            <person name="Herschleb J."/>
            <person name="Runnheim R."/>
            <person name="Forrest D."/>
            <person name="Amos-Landgraf J."/>
            <person name="Schwartz D.C."/>
            <person name="Cheng Z."/>
            <person name="Lindblad-Toh K."/>
            <person name="Eichler E.E."/>
            <person name="Ponting C.P."/>
        </authorList>
    </citation>
    <scope>NUCLEOTIDE SEQUENCE [LARGE SCALE GENOMIC DNA]</scope>
    <source>
        <strain>C57BL/6J</strain>
    </source>
</reference>
<reference key="4">
    <citation type="submission" date="2005-09" db="EMBL/GenBank/DDBJ databases">
        <authorList>
            <person name="Mural R.J."/>
            <person name="Adams M.D."/>
            <person name="Myers E.W."/>
            <person name="Smith H.O."/>
            <person name="Venter J.C."/>
        </authorList>
    </citation>
    <scope>NUCLEOTIDE SEQUENCE [LARGE SCALE GENOMIC DNA]</scope>
</reference>
<reference key="5">
    <citation type="submission" date="2009-01" db="UniProtKB">
        <authorList>
            <person name="Lubec G."/>
            <person name="Kang S.U."/>
            <person name="Sunyer B."/>
            <person name="Chen W.-Q."/>
        </authorList>
    </citation>
    <scope>PROTEIN SEQUENCE OF 1-12; 42-49; 61-68 AND 215-224</scope>
    <scope>IDENTIFICATION BY MASS SPECTROMETRY</scope>
    <source>
        <strain>C57BL/6J</strain>
        <strain>OF1</strain>
        <tissue>Brain</tissue>
        <tissue>Hippocampus</tissue>
    </source>
</reference>
<reference key="6">
    <citation type="journal article" date="2006" name="Nature">
        <title>A keratin cytoskeletal protein regulates protein synthesis and epithelial cell growth.</title>
        <authorList>
            <person name="Kim S."/>
            <person name="Wong P."/>
            <person name="Coulombe P.A."/>
        </authorList>
    </citation>
    <scope>FUNCTION</scope>
    <scope>INTERACTION WITH KRT17</scope>
    <scope>SUBCELLULAR LOCATION</scope>
    <scope>TISSUE SPECIFICITY</scope>
    <scope>INDUCTION</scope>
</reference>
<reference key="7">
    <citation type="journal article" date="2010" name="Cell">
        <title>A tissue-specific atlas of mouse protein phosphorylation and expression.</title>
        <authorList>
            <person name="Huttlin E.L."/>
            <person name="Jedrychowski M.P."/>
            <person name="Elias J.E."/>
            <person name="Goswami T."/>
            <person name="Rad R."/>
            <person name="Beausoleil S.A."/>
            <person name="Villen J."/>
            <person name="Haas W."/>
            <person name="Sowa M.E."/>
            <person name="Gygi S.P."/>
        </authorList>
    </citation>
    <scope>IDENTIFICATION BY MASS SPECTROMETRY [LARGE SCALE ANALYSIS]</scope>
    <source>
        <tissue>Kidney</tissue>
        <tissue>Liver</tissue>
        <tissue>Lung</tissue>
    </source>
</reference>
<reference key="8">
    <citation type="journal article" date="2010" name="Int. J. Biochem. Cell Biol.">
        <title>SLy2 targets the nuclear SAP30/HDAC1 complex.</title>
        <authorList>
            <person name="Brandt S."/>
            <person name="Ellwanger K."/>
            <person name="Beuter-Gunia C."/>
            <person name="Schuster M."/>
            <person name="Hausser A."/>
            <person name="Schmitz I."/>
            <person name="Beer-Hammer S."/>
        </authorList>
    </citation>
    <scope>INTERACTION WITH SAMSN1</scope>
</reference>
<reference key="9">
    <citation type="journal article" date="2015" name="Biochem. Biophys. Res. Commun.">
        <title>Suppression of death-associated protein kinase 2 by interaction with 14-3-3 proteins.</title>
        <authorList>
            <person name="Yuasa K."/>
            <person name="Ota R."/>
            <person name="Matsuda S."/>
            <person name="Isshiki K."/>
            <person name="Inoue M."/>
            <person name="Tsuji A."/>
        </authorList>
    </citation>
    <scope>INTERACTION WITH DAPK2</scope>
</reference>
<reference key="10">
    <citation type="journal article" date="2018" name="J. Cell Sci.">
        <title>14-3-3 proteins regulate desmosomal adhesion via plakophilins.</title>
        <authorList>
            <person name="Rietscher K."/>
            <person name="Keil R."/>
            <person name="Jordan A."/>
            <person name="Hatzfeld M."/>
        </authorList>
    </citation>
    <scope>TISSUE SPECIFICITY</scope>
</reference>
<name>1433S_MOUSE</name>
<organism>
    <name type="scientific">Mus musculus</name>
    <name type="common">Mouse</name>
    <dbReference type="NCBI Taxonomy" id="10090"/>
    <lineage>
        <taxon>Eukaryota</taxon>
        <taxon>Metazoa</taxon>
        <taxon>Chordata</taxon>
        <taxon>Craniata</taxon>
        <taxon>Vertebrata</taxon>
        <taxon>Euteleostomi</taxon>
        <taxon>Mammalia</taxon>
        <taxon>Eutheria</taxon>
        <taxon>Euarchontoglires</taxon>
        <taxon>Glires</taxon>
        <taxon>Rodentia</taxon>
        <taxon>Myomorpha</taxon>
        <taxon>Muroidea</taxon>
        <taxon>Muridae</taxon>
        <taxon>Murinae</taxon>
        <taxon>Mus</taxon>
        <taxon>Mus</taxon>
    </lineage>
</organism>